<sequence length="470" mass="53251">MIESNHVVLWNRCLEVIKDNVPETTYNTWFAPIVPLKYEDKTLIVQIPSQFFYEILEEKFVDLLRKTLYKAIGEGTKLMYNVMVDKTSIPNQTVNLEASNRSTAVTPKSIVGGNKAPSFLKAPAVQDLDPHLNPNYNFENFIEGYSNKLSRSVAEAVAQNPAGTAFNPLFLYGASGVGKTHLANAIGTKIKELYADKRVLYVSAHLFQVQYTDSVRNNTTNDFINFYQTIDVLIIDDIQEFAGVTKTQNTFFHIFNHLHQNGKQLILTSDRAPVLLQGMEERLLTRFKWGMVAELEKPTVELRKNILRNKIHRDGLQFPPEVIDYIAENVNESVRDLEGIVIAIMARSTIFNKEIDLDLAQHIVHGVVHNETKAVTIDDILKVVCKHFDLEASAIHTKSRKREVVQARQIAMYLAKNYTDFSTSKIGKFIGNKDHATVLHACKTVKGQLEVDKSFQAEVQEIESLLKKKA</sequence>
<name>DNAA_BACTN</name>
<accession>Q8A5U5</accession>
<gene>
    <name evidence="1" type="primary">dnaA</name>
    <name type="ordered locus">BT_2143</name>
</gene>
<comment type="function">
    <text evidence="1">Plays an essential role in the initiation and regulation of chromosomal replication. ATP-DnaA binds to the origin of replication (oriC) to initiate formation of the DNA replication initiation complex once per cell cycle. Binds the DnaA box (a 9 base pair repeat at the origin) and separates the double-stranded (ds)DNA. Forms a right-handed helical filament on oriC DNA; dsDNA binds to the exterior of the filament while single-stranded (ss)DNA is stabiized in the filament's interior. The ATP-DnaA-oriC complex binds and stabilizes one strand of the AT-rich DNA unwinding element (DUE), permitting loading of DNA polymerase. After initiation quickly degrades to an ADP-DnaA complex that is not apt for DNA replication. Binds acidic phospholipids.</text>
</comment>
<comment type="subunit">
    <text evidence="1">Oligomerizes as a right-handed, spiral filament on DNA at oriC.</text>
</comment>
<comment type="subcellular location">
    <subcellularLocation>
        <location evidence="1">Cytoplasm</location>
    </subcellularLocation>
</comment>
<comment type="domain">
    <text evidence="1">Domain I is involved in oligomerization and binding regulators, domain II is flexibile and of varying length in different bacteria, domain III forms the AAA+ region, while domain IV binds dsDNA.</text>
</comment>
<comment type="similarity">
    <text evidence="1">Belongs to the DnaA family.</text>
</comment>
<protein>
    <recommendedName>
        <fullName evidence="1">Chromosomal replication initiator protein DnaA</fullName>
    </recommendedName>
</protein>
<reference key="1">
    <citation type="journal article" date="2003" name="Science">
        <title>A genomic view of the human-Bacteroides thetaiotaomicron symbiosis.</title>
        <authorList>
            <person name="Xu J."/>
            <person name="Bjursell M.K."/>
            <person name="Himrod J."/>
            <person name="Deng S."/>
            <person name="Carmichael L.K."/>
            <person name="Chiang H.C."/>
            <person name="Hooper L.V."/>
            <person name="Gordon J.I."/>
        </authorList>
    </citation>
    <scope>NUCLEOTIDE SEQUENCE [LARGE SCALE GENOMIC DNA]</scope>
    <source>
        <strain>ATCC 29148 / DSM 2079 / JCM 5827 / CCUG 10774 / NCTC 10582 / VPI-5482 / E50</strain>
    </source>
</reference>
<organism>
    <name type="scientific">Bacteroides thetaiotaomicron (strain ATCC 29148 / DSM 2079 / JCM 5827 / CCUG 10774 / NCTC 10582 / VPI-5482 / E50)</name>
    <dbReference type="NCBI Taxonomy" id="226186"/>
    <lineage>
        <taxon>Bacteria</taxon>
        <taxon>Pseudomonadati</taxon>
        <taxon>Bacteroidota</taxon>
        <taxon>Bacteroidia</taxon>
        <taxon>Bacteroidales</taxon>
        <taxon>Bacteroidaceae</taxon>
        <taxon>Bacteroides</taxon>
    </lineage>
</organism>
<proteinExistence type="inferred from homology"/>
<keyword id="KW-0067">ATP-binding</keyword>
<keyword id="KW-0963">Cytoplasm</keyword>
<keyword id="KW-0235">DNA replication</keyword>
<keyword id="KW-0238">DNA-binding</keyword>
<keyword id="KW-0446">Lipid-binding</keyword>
<keyword id="KW-0547">Nucleotide-binding</keyword>
<keyword id="KW-1185">Reference proteome</keyword>
<dbReference type="EMBL" id="AE015928">
    <property type="protein sequence ID" value="AAO77250.1"/>
    <property type="molecule type" value="Genomic_DNA"/>
</dbReference>
<dbReference type="RefSeq" id="NP_811056.1">
    <property type="nucleotide sequence ID" value="NC_004663.1"/>
</dbReference>
<dbReference type="RefSeq" id="WP_008759760.1">
    <property type="nucleotide sequence ID" value="NZ_UYXG01000026.1"/>
</dbReference>
<dbReference type="SMR" id="Q8A5U5"/>
<dbReference type="FunCoup" id="Q8A5U5">
    <property type="interactions" value="318"/>
</dbReference>
<dbReference type="STRING" id="226186.BT_2143"/>
<dbReference type="PaxDb" id="226186-BT_2143"/>
<dbReference type="DNASU" id="1074333"/>
<dbReference type="EnsemblBacteria" id="AAO77250">
    <property type="protein sequence ID" value="AAO77250"/>
    <property type="gene ID" value="BT_2143"/>
</dbReference>
<dbReference type="GeneID" id="60923313"/>
<dbReference type="KEGG" id="bth:BT_2143"/>
<dbReference type="PATRIC" id="fig|226186.12.peg.2207"/>
<dbReference type="eggNOG" id="COG0593">
    <property type="taxonomic scope" value="Bacteria"/>
</dbReference>
<dbReference type="HOGENOM" id="CLU_026910_3_0_10"/>
<dbReference type="InParanoid" id="Q8A5U5"/>
<dbReference type="OrthoDB" id="9807019at2"/>
<dbReference type="Proteomes" id="UP000001414">
    <property type="component" value="Chromosome"/>
</dbReference>
<dbReference type="GO" id="GO:0005737">
    <property type="term" value="C:cytoplasm"/>
    <property type="evidence" value="ECO:0007669"/>
    <property type="project" value="UniProtKB-SubCell"/>
</dbReference>
<dbReference type="GO" id="GO:0005886">
    <property type="term" value="C:plasma membrane"/>
    <property type="evidence" value="ECO:0000318"/>
    <property type="project" value="GO_Central"/>
</dbReference>
<dbReference type="GO" id="GO:0005524">
    <property type="term" value="F:ATP binding"/>
    <property type="evidence" value="ECO:0007669"/>
    <property type="project" value="UniProtKB-UniRule"/>
</dbReference>
<dbReference type="GO" id="GO:0016887">
    <property type="term" value="F:ATP hydrolysis activity"/>
    <property type="evidence" value="ECO:0007669"/>
    <property type="project" value="InterPro"/>
</dbReference>
<dbReference type="GO" id="GO:0003688">
    <property type="term" value="F:DNA replication origin binding"/>
    <property type="evidence" value="ECO:0000318"/>
    <property type="project" value="GO_Central"/>
</dbReference>
<dbReference type="GO" id="GO:0008289">
    <property type="term" value="F:lipid binding"/>
    <property type="evidence" value="ECO:0007669"/>
    <property type="project" value="UniProtKB-KW"/>
</dbReference>
<dbReference type="GO" id="GO:0006260">
    <property type="term" value="P:DNA replication"/>
    <property type="evidence" value="ECO:0000318"/>
    <property type="project" value="GO_Central"/>
</dbReference>
<dbReference type="GO" id="GO:0006270">
    <property type="term" value="P:DNA replication initiation"/>
    <property type="evidence" value="ECO:0000318"/>
    <property type="project" value="GO_Central"/>
</dbReference>
<dbReference type="GO" id="GO:0006275">
    <property type="term" value="P:regulation of DNA replication"/>
    <property type="evidence" value="ECO:0007669"/>
    <property type="project" value="UniProtKB-UniRule"/>
</dbReference>
<dbReference type="CDD" id="cd00009">
    <property type="entry name" value="AAA"/>
    <property type="match status" value="1"/>
</dbReference>
<dbReference type="CDD" id="cd06571">
    <property type="entry name" value="Bac_DnaA_C"/>
    <property type="match status" value="1"/>
</dbReference>
<dbReference type="FunFam" id="1.10.1750.10:FF:000004">
    <property type="entry name" value="Chromosomal replication initiator protein DnaA"/>
    <property type="match status" value="1"/>
</dbReference>
<dbReference type="FunFam" id="1.10.8.60:FF:000090">
    <property type="entry name" value="Chromosomal replication initiator protein DnaA"/>
    <property type="match status" value="1"/>
</dbReference>
<dbReference type="FunFam" id="3.40.50.300:FF:000668">
    <property type="entry name" value="Chromosomal replication initiator protein DnaA"/>
    <property type="match status" value="1"/>
</dbReference>
<dbReference type="Gene3D" id="1.10.1750.10">
    <property type="match status" value="1"/>
</dbReference>
<dbReference type="Gene3D" id="1.10.8.60">
    <property type="match status" value="1"/>
</dbReference>
<dbReference type="Gene3D" id="3.30.300.180">
    <property type="match status" value="1"/>
</dbReference>
<dbReference type="Gene3D" id="3.40.50.300">
    <property type="entry name" value="P-loop containing nucleotide triphosphate hydrolases"/>
    <property type="match status" value="1"/>
</dbReference>
<dbReference type="HAMAP" id="MF_00377">
    <property type="entry name" value="DnaA_bact"/>
    <property type="match status" value="1"/>
</dbReference>
<dbReference type="InterPro" id="IPR003593">
    <property type="entry name" value="AAA+_ATPase"/>
</dbReference>
<dbReference type="InterPro" id="IPR001957">
    <property type="entry name" value="Chromosome_initiator_DnaA"/>
</dbReference>
<dbReference type="InterPro" id="IPR020591">
    <property type="entry name" value="Chromosome_initiator_DnaA-like"/>
</dbReference>
<dbReference type="InterPro" id="IPR018312">
    <property type="entry name" value="Chromosome_initiator_DnaA_CS"/>
</dbReference>
<dbReference type="InterPro" id="IPR013159">
    <property type="entry name" value="DnaA_C"/>
</dbReference>
<dbReference type="InterPro" id="IPR013317">
    <property type="entry name" value="DnaA_dom"/>
</dbReference>
<dbReference type="InterPro" id="IPR024633">
    <property type="entry name" value="DnaA_N_dom"/>
</dbReference>
<dbReference type="InterPro" id="IPR038454">
    <property type="entry name" value="DnaA_N_sf"/>
</dbReference>
<dbReference type="InterPro" id="IPR027417">
    <property type="entry name" value="P-loop_NTPase"/>
</dbReference>
<dbReference type="InterPro" id="IPR010921">
    <property type="entry name" value="Trp_repressor/repl_initiator"/>
</dbReference>
<dbReference type="NCBIfam" id="TIGR00362">
    <property type="entry name" value="DnaA"/>
    <property type="match status" value="1"/>
</dbReference>
<dbReference type="PANTHER" id="PTHR30050">
    <property type="entry name" value="CHROMOSOMAL REPLICATION INITIATOR PROTEIN DNAA"/>
    <property type="match status" value="1"/>
</dbReference>
<dbReference type="PANTHER" id="PTHR30050:SF2">
    <property type="entry name" value="CHROMOSOMAL REPLICATION INITIATOR PROTEIN DNAA"/>
    <property type="match status" value="1"/>
</dbReference>
<dbReference type="Pfam" id="PF00308">
    <property type="entry name" value="Bac_DnaA"/>
    <property type="match status" value="1"/>
</dbReference>
<dbReference type="Pfam" id="PF08299">
    <property type="entry name" value="Bac_DnaA_C"/>
    <property type="match status" value="1"/>
</dbReference>
<dbReference type="Pfam" id="PF11638">
    <property type="entry name" value="DnaA_N"/>
    <property type="match status" value="1"/>
</dbReference>
<dbReference type="PRINTS" id="PR00051">
    <property type="entry name" value="DNAA"/>
</dbReference>
<dbReference type="SMART" id="SM00382">
    <property type="entry name" value="AAA"/>
    <property type="match status" value="1"/>
</dbReference>
<dbReference type="SMART" id="SM00760">
    <property type="entry name" value="Bac_DnaA_C"/>
    <property type="match status" value="1"/>
</dbReference>
<dbReference type="SUPFAM" id="SSF52540">
    <property type="entry name" value="P-loop containing nucleoside triphosphate hydrolases"/>
    <property type="match status" value="1"/>
</dbReference>
<dbReference type="SUPFAM" id="SSF48295">
    <property type="entry name" value="TrpR-like"/>
    <property type="match status" value="1"/>
</dbReference>
<dbReference type="PROSITE" id="PS01008">
    <property type="entry name" value="DNAA"/>
    <property type="match status" value="1"/>
</dbReference>
<evidence type="ECO:0000255" key="1">
    <source>
        <dbReference type="HAMAP-Rule" id="MF_00377"/>
    </source>
</evidence>
<feature type="chain" id="PRO_0000114134" description="Chromosomal replication initiator protein DnaA">
    <location>
        <begin position="1"/>
        <end position="470"/>
    </location>
</feature>
<feature type="region of interest" description="Domain I, interacts with DnaA modulators" evidence="1">
    <location>
        <begin position="1"/>
        <end position="89"/>
    </location>
</feature>
<feature type="region of interest" description="Domain II" evidence="1">
    <location>
        <begin position="89"/>
        <end position="130"/>
    </location>
</feature>
<feature type="region of interest" description="Domain III, AAA+ region" evidence="1">
    <location>
        <begin position="131"/>
        <end position="348"/>
    </location>
</feature>
<feature type="region of interest" description="Domain IV, binds dsDNA" evidence="1">
    <location>
        <begin position="349"/>
        <end position="470"/>
    </location>
</feature>
<feature type="binding site" evidence="1">
    <location>
        <position position="176"/>
    </location>
    <ligand>
        <name>ATP</name>
        <dbReference type="ChEBI" id="CHEBI:30616"/>
    </ligand>
</feature>
<feature type="binding site" evidence="1">
    <location>
        <position position="178"/>
    </location>
    <ligand>
        <name>ATP</name>
        <dbReference type="ChEBI" id="CHEBI:30616"/>
    </ligand>
</feature>
<feature type="binding site" evidence="1">
    <location>
        <position position="179"/>
    </location>
    <ligand>
        <name>ATP</name>
        <dbReference type="ChEBI" id="CHEBI:30616"/>
    </ligand>
</feature>
<feature type="binding site" evidence="1">
    <location>
        <position position="180"/>
    </location>
    <ligand>
        <name>ATP</name>
        <dbReference type="ChEBI" id="CHEBI:30616"/>
    </ligand>
</feature>